<evidence type="ECO:0000250" key="1"/>
<evidence type="ECO:0000255" key="2"/>
<evidence type="ECO:0000305" key="3"/>
<keyword id="KW-1003">Cell membrane</keyword>
<keyword id="KW-0472">Membrane</keyword>
<keyword id="KW-0804">Transcription</keyword>
<keyword id="KW-0805">Transcription regulation</keyword>
<keyword id="KW-0812">Transmembrane</keyword>
<keyword id="KW-1133">Transmembrane helix</keyword>
<comment type="function">
    <text evidence="3">An anti-sigma factor for extracytoplasmic function (ECF) sigma factor SigL. ECF sigma factors are held in an inactive form by an anti-sigma factor until released by regulated intramembrane proteolysis (RIP). RIP occurs when an extracytoplasmic signal triggers a concerted proteolytic cascade to transmit information and elicit cellular responses. The membrane-spanning regulatory substrate protein is first cut extracytoplasmically (site-1 protease, S1P), then within the membrane itself (site-2 protease, S2P, Rip1), while cytoplasmic proteases finish degrading the regulatory protein, liberating the sigma factor (Probable).</text>
</comment>
<comment type="subunit">
    <text evidence="1">Interacts with ECF RNA polymerase sigma factor SigL; this should inhibit the interaction of SigL with the RNA polymerase catalytic core.</text>
</comment>
<comment type="subcellular location">
    <subcellularLocation>
        <location evidence="3">Cell membrane</location>
        <topology evidence="3">Single-pass membrane protein</topology>
    </subcellularLocation>
</comment>
<comment type="domain">
    <text evidence="3">The cytosolic domain interacts with sigma factor SigL.</text>
</comment>
<comment type="PTM">
    <text>Probably cleaved within the membrane by Rip1 near the cytoplasmic membrane interface.</text>
</comment>
<proteinExistence type="evidence at protein level"/>
<reference key="1">
    <citation type="journal article" date="2012" name="J. Bacteriol.">
        <title>Complete annotated genome sequence of Mycobacterium tuberculosis Erdman.</title>
        <authorList>
            <person name="Miyoshi-Akiyama T."/>
            <person name="Matsumura K."/>
            <person name="Iwai H."/>
            <person name="Funatogawa K."/>
            <person name="Kirikae T."/>
        </authorList>
    </citation>
    <scope>NUCLEOTIDE SEQUENCE [LARGE SCALE GENOMIC DNA]</scope>
    <source>
        <strain>ATCC 35801 / TMC 107 / Erdman</strain>
    </source>
</reference>
<reference key="2">
    <citation type="journal article" date="2010" name="Mol. Microbiol.">
        <title>M. tuberculosis intramembrane protease Rip1 controls transcription through three anti-sigma factor substrates.</title>
        <authorList>
            <person name="Sklar J.G."/>
            <person name="Makinoshima H."/>
            <person name="Schneider J.S."/>
            <person name="Glickman M.S."/>
        </authorList>
    </citation>
    <scope>POSSIBLE CLEAVAGE BY RIP1</scope>
    <source>
        <strain>ATCC 35801 / TMC 107 / Erdman</strain>
    </source>
</reference>
<protein>
    <recommendedName>
        <fullName>Anti-sigma-L factor RslA</fullName>
    </recommendedName>
    <alternativeName>
        <fullName>Regulator of SigL</fullName>
    </alternativeName>
    <alternativeName>
        <fullName>Sigma-L anti-sigma factor RslA</fullName>
    </alternativeName>
</protein>
<gene>
    <name type="primary">rslA</name>
    <name type="ordered locus">ERDMAN_0809</name>
</gene>
<sequence>MTMPLRGLGPPDDTGVREVSTGDDHHYAMWDAAYVLGALSAADRREFEAHLAGCPECRGAVTELCGVPALLSQLDRDEVAAISESAPTVVASGLSPELLPSLLAAVHRRRRRTRLITWVASSAAAAVLAIGVLVGVQGHSAAPQRAAVSALPMAQVGTQLLASTVSISGEPWGTFINLRCVCLAPPYASHDTLAMVVVGRDGSQTRLATWLAEPGHTATPAGSISTPVDQIAAVQVVAADTGQVLLQRSL</sequence>
<feature type="chain" id="PRO_0000422683" description="Anti-sigma-L factor RslA">
    <location>
        <begin position="1"/>
        <end position="250"/>
    </location>
</feature>
<feature type="topological domain" description="Cytoplasmic" evidence="2">
    <location>
        <begin position="1"/>
        <end position="115"/>
    </location>
</feature>
<feature type="transmembrane region" description="Helical" evidence="2">
    <location>
        <begin position="116"/>
        <end position="136"/>
    </location>
</feature>
<feature type="topological domain" description="Extracellular" evidence="2">
    <location>
        <begin position="137"/>
        <end position="250"/>
    </location>
</feature>
<accession>H8EXN2</accession>
<dbReference type="EMBL" id="AP012340">
    <property type="protein sequence ID" value="BAL64621.1"/>
    <property type="molecule type" value="Genomic_DNA"/>
</dbReference>
<dbReference type="RefSeq" id="WP_003403733.1">
    <property type="nucleotide sequence ID" value="NZ_KK339487.1"/>
</dbReference>
<dbReference type="SMR" id="H8EXN2"/>
<dbReference type="KEGG" id="mtn:ERDMAN_0809"/>
<dbReference type="PATRIC" id="fig|652616.3.peg.820"/>
<dbReference type="HOGENOM" id="CLU_056526_1_0_11"/>
<dbReference type="GO" id="GO:0005886">
    <property type="term" value="C:plasma membrane"/>
    <property type="evidence" value="ECO:0007669"/>
    <property type="project" value="UniProtKB-SubCell"/>
</dbReference>
<dbReference type="GO" id="GO:0016989">
    <property type="term" value="F:sigma factor antagonist activity"/>
    <property type="evidence" value="ECO:0007669"/>
    <property type="project" value="TreeGrafter"/>
</dbReference>
<dbReference type="GO" id="GO:0006417">
    <property type="term" value="P:regulation of translation"/>
    <property type="evidence" value="ECO:0007669"/>
    <property type="project" value="TreeGrafter"/>
</dbReference>
<dbReference type="Gene3D" id="1.10.10.1320">
    <property type="entry name" value="Anti-sigma factor, zinc-finger domain"/>
    <property type="match status" value="1"/>
</dbReference>
<dbReference type="InterPro" id="IPR051474">
    <property type="entry name" value="Anti-sigma-K/W_factor"/>
</dbReference>
<dbReference type="InterPro" id="IPR041916">
    <property type="entry name" value="Anti_sigma_zinc_sf"/>
</dbReference>
<dbReference type="InterPro" id="IPR027383">
    <property type="entry name" value="Znf_put"/>
</dbReference>
<dbReference type="PANTHER" id="PTHR37461">
    <property type="entry name" value="ANTI-SIGMA-K FACTOR RSKA"/>
    <property type="match status" value="1"/>
</dbReference>
<dbReference type="PANTHER" id="PTHR37461:SF1">
    <property type="entry name" value="ANTI-SIGMA-K FACTOR RSKA"/>
    <property type="match status" value="1"/>
</dbReference>
<dbReference type="Pfam" id="PF13490">
    <property type="entry name" value="zf-HC2"/>
    <property type="match status" value="1"/>
</dbReference>
<organism>
    <name type="scientific">Mycobacterium tuberculosis (strain ATCC 35801 / TMC 107 / Erdman)</name>
    <dbReference type="NCBI Taxonomy" id="652616"/>
    <lineage>
        <taxon>Bacteria</taxon>
        <taxon>Bacillati</taxon>
        <taxon>Actinomycetota</taxon>
        <taxon>Actinomycetes</taxon>
        <taxon>Mycobacteriales</taxon>
        <taxon>Mycobacteriaceae</taxon>
        <taxon>Mycobacterium</taxon>
        <taxon>Mycobacterium tuberculosis complex</taxon>
    </lineage>
</organism>
<name>RSLA_MYCTE</name>